<sequence length="337" mass="36030">MRVLGIETSCDETGIAIYDDERGLLANQLYSQVKLHADYGGVVPELASRDHVRKTVPLIQAALKEAGLMASDIDAVAYTAGPGLVGALLVGATVGRSLAFAWNVPAIPVHHMEGHLLAPMLEDNPPDFPFVALLVSGGHTQLISVTGIGQYELLGESIDDAAGEAFDKTAKLLGLDYPGGPMLSKMALQGTAGRFVFPRPMTDRPGLDFSFSGLKTFAANTIRSNGEDEQTRADIARAFEDAVVDTLMIKCKRALESTGFKRLVMAGGVSANQTLRAKLAEMMQKRCGEVFYARPEFCTDNGAMIAYAGMVRFKAGVTADLGVTVRPRWPLAELPAV</sequence>
<keyword id="KW-0012">Acyltransferase</keyword>
<keyword id="KW-0963">Cytoplasm</keyword>
<keyword id="KW-0408">Iron</keyword>
<keyword id="KW-0479">Metal-binding</keyword>
<keyword id="KW-1185">Reference proteome</keyword>
<keyword id="KW-0808">Transferase</keyword>
<keyword id="KW-0819">tRNA processing</keyword>
<name>TSAD_SALAR</name>
<protein>
    <recommendedName>
        <fullName evidence="1">tRNA N6-adenosine threonylcarbamoyltransferase</fullName>
        <ecNumber evidence="1">2.3.1.234</ecNumber>
    </recommendedName>
    <alternativeName>
        <fullName evidence="1">N6-L-threonylcarbamoyladenine synthase</fullName>
        <shortName evidence="1">t(6)A synthase</shortName>
    </alternativeName>
    <alternativeName>
        <fullName evidence="1">t(6)A37 threonylcarbamoyladenosine biosynthesis protein TsaD</fullName>
    </alternativeName>
    <alternativeName>
        <fullName evidence="1">tRNA threonylcarbamoyladenosine biosynthesis protein TsaD</fullName>
    </alternativeName>
</protein>
<proteinExistence type="inferred from homology"/>
<organism>
    <name type="scientific">Salmonella arizonae (strain ATCC BAA-731 / CDC346-86 / RSK2980)</name>
    <dbReference type="NCBI Taxonomy" id="41514"/>
    <lineage>
        <taxon>Bacteria</taxon>
        <taxon>Pseudomonadati</taxon>
        <taxon>Pseudomonadota</taxon>
        <taxon>Gammaproteobacteria</taxon>
        <taxon>Enterobacterales</taxon>
        <taxon>Enterobacteriaceae</taxon>
        <taxon>Salmonella</taxon>
    </lineage>
</organism>
<gene>
    <name evidence="1" type="primary">tsaD</name>
    <name type="synonym">gcp</name>
    <name type="ordered locus">SARI_04421</name>
</gene>
<reference key="1">
    <citation type="submission" date="2007-11" db="EMBL/GenBank/DDBJ databases">
        <authorList>
            <consortium name="The Salmonella enterica serovar Arizonae Genome Sequencing Project"/>
            <person name="McClelland M."/>
            <person name="Sanderson E.K."/>
            <person name="Porwollik S."/>
            <person name="Spieth J."/>
            <person name="Clifton W.S."/>
            <person name="Fulton R."/>
            <person name="Chunyan W."/>
            <person name="Wollam A."/>
            <person name="Shah N."/>
            <person name="Pepin K."/>
            <person name="Bhonagiri V."/>
            <person name="Nash W."/>
            <person name="Johnson M."/>
            <person name="Thiruvilangam P."/>
            <person name="Wilson R."/>
        </authorList>
    </citation>
    <scope>NUCLEOTIDE SEQUENCE [LARGE SCALE GENOMIC DNA]</scope>
    <source>
        <strain>ATCC BAA-731 / CDC346-86 / RSK2980</strain>
    </source>
</reference>
<evidence type="ECO:0000255" key="1">
    <source>
        <dbReference type="HAMAP-Rule" id="MF_01445"/>
    </source>
</evidence>
<comment type="function">
    <text evidence="1">Required for the formation of a threonylcarbamoyl group on adenosine at position 37 (t(6)A37) in tRNAs that read codons beginning with adenine. Is involved in the transfer of the threonylcarbamoyl moiety of threonylcarbamoyl-AMP (TC-AMP) to the N6 group of A37, together with TsaE and TsaB. TsaD likely plays a direct catalytic role in this reaction.</text>
</comment>
<comment type="catalytic activity">
    <reaction evidence="1">
        <text>L-threonylcarbamoyladenylate + adenosine(37) in tRNA = N(6)-L-threonylcarbamoyladenosine(37) in tRNA + AMP + H(+)</text>
        <dbReference type="Rhea" id="RHEA:37059"/>
        <dbReference type="Rhea" id="RHEA-COMP:10162"/>
        <dbReference type="Rhea" id="RHEA-COMP:10163"/>
        <dbReference type="ChEBI" id="CHEBI:15378"/>
        <dbReference type="ChEBI" id="CHEBI:73682"/>
        <dbReference type="ChEBI" id="CHEBI:74411"/>
        <dbReference type="ChEBI" id="CHEBI:74418"/>
        <dbReference type="ChEBI" id="CHEBI:456215"/>
        <dbReference type="EC" id="2.3.1.234"/>
    </reaction>
</comment>
<comment type="cofactor">
    <cofactor evidence="1">
        <name>Fe(2+)</name>
        <dbReference type="ChEBI" id="CHEBI:29033"/>
    </cofactor>
    <text evidence="1">Binds 1 Fe(2+) ion per subunit.</text>
</comment>
<comment type="subcellular location">
    <subcellularLocation>
        <location evidence="1">Cytoplasm</location>
    </subcellularLocation>
</comment>
<comment type="similarity">
    <text evidence="1">Belongs to the KAE1 / TsaD family.</text>
</comment>
<feature type="chain" id="PRO_1000087486" description="tRNA N6-adenosine threonylcarbamoyltransferase">
    <location>
        <begin position="1"/>
        <end position="337"/>
    </location>
</feature>
<feature type="binding site" evidence="1">
    <location>
        <position position="111"/>
    </location>
    <ligand>
        <name>Fe cation</name>
        <dbReference type="ChEBI" id="CHEBI:24875"/>
    </ligand>
</feature>
<feature type="binding site" evidence="1">
    <location>
        <position position="115"/>
    </location>
    <ligand>
        <name>Fe cation</name>
        <dbReference type="ChEBI" id="CHEBI:24875"/>
    </ligand>
</feature>
<feature type="binding site" evidence="1">
    <location>
        <begin position="134"/>
        <end position="138"/>
    </location>
    <ligand>
        <name>substrate</name>
    </ligand>
</feature>
<feature type="binding site" evidence="1">
    <location>
        <position position="167"/>
    </location>
    <ligand>
        <name>substrate</name>
    </ligand>
</feature>
<feature type="binding site" evidence="1">
    <location>
        <position position="180"/>
    </location>
    <ligand>
        <name>substrate</name>
    </ligand>
</feature>
<feature type="binding site" evidence="1">
    <location>
        <position position="272"/>
    </location>
    <ligand>
        <name>substrate</name>
    </ligand>
</feature>
<feature type="binding site" evidence="1">
    <location>
        <position position="300"/>
    </location>
    <ligand>
        <name>Fe cation</name>
        <dbReference type="ChEBI" id="CHEBI:24875"/>
    </ligand>
</feature>
<accession>A9MPV5</accession>
<dbReference type="EC" id="2.3.1.234" evidence="1"/>
<dbReference type="EMBL" id="CP000880">
    <property type="protein sequence ID" value="ABX24198.1"/>
    <property type="molecule type" value="Genomic_DNA"/>
</dbReference>
<dbReference type="SMR" id="A9MPV5"/>
<dbReference type="STRING" id="41514.SARI_04421"/>
<dbReference type="KEGG" id="ses:SARI_04421"/>
<dbReference type="HOGENOM" id="CLU_023208_0_0_6"/>
<dbReference type="Proteomes" id="UP000002084">
    <property type="component" value="Chromosome"/>
</dbReference>
<dbReference type="GO" id="GO:0005737">
    <property type="term" value="C:cytoplasm"/>
    <property type="evidence" value="ECO:0007669"/>
    <property type="project" value="UniProtKB-SubCell"/>
</dbReference>
<dbReference type="GO" id="GO:0005506">
    <property type="term" value="F:iron ion binding"/>
    <property type="evidence" value="ECO:0007669"/>
    <property type="project" value="UniProtKB-UniRule"/>
</dbReference>
<dbReference type="GO" id="GO:0061711">
    <property type="term" value="F:N(6)-L-threonylcarbamoyladenine synthase activity"/>
    <property type="evidence" value="ECO:0007669"/>
    <property type="project" value="UniProtKB-EC"/>
</dbReference>
<dbReference type="GO" id="GO:0002949">
    <property type="term" value="P:tRNA threonylcarbamoyladenosine modification"/>
    <property type="evidence" value="ECO:0007669"/>
    <property type="project" value="UniProtKB-UniRule"/>
</dbReference>
<dbReference type="CDD" id="cd24097">
    <property type="entry name" value="ASKHA_NBD_TsaD-like"/>
    <property type="match status" value="1"/>
</dbReference>
<dbReference type="FunFam" id="3.30.420.40:FF:000031">
    <property type="entry name" value="tRNA N6-adenosine threonylcarbamoyltransferase"/>
    <property type="match status" value="1"/>
</dbReference>
<dbReference type="Gene3D" id="3.30.420.40">
    <property type="match status" value="2"/>
</dbReference>
<dbReference type="HAMAP" id="MF_01445">
    <property type="entry name" value="TsaD"/>
    <property type="match status" value="1"/>
</dbReference>
<dbReference type="InterPro" id="IPR043129">
    <property type="entry name" value="ATPase_NBD"/>
</dbReference>
<dbReference type="InterPro" id="IPR000905">
    <property type="entry name" value="Gcp-like_dom"/>
</dbReference>
<dbReference type="InterPro" id="IPR017861">
    <property type="entry name" value="KAE1/TsaD"/>
</dbReference>
<dbReference type="InterPro" id="IPR017860">
    <property type="entry name" value="Peptidase_M22_CS"/>
</dbReference>
<dbReference type="InterPro" id="IPR022450">
    <property type="entry name" value="TsaD"/>
</dbReference>
<dbReference type="NCBIfam" id="TIGR00329">
    <property type="entry name" value="gcp_kae1"/>
    <property type="match status" value="1"/>
</dbReference>
<dbReference type="NCBIfam" id="TIGR03723">
    <property type="entry name" value="T6A_TsaD_YgjD"/>
    <property type="match status" value="1"/>
</dbReference>
<dbReference type="PANTHER" id="PTHR11735">
    <property type="entry name" value="TRNA N6-ADENOSINE THREONYLCARBAMOYLTRANSFERASE"/>
    <property type="match status" value="1"/>
</dbReference>
<dbReference type="PANTHER" id="PTHR11735:SF6">
    <property type="entry name" value="TRNA N6-ADENOSINE THREONYLCARBAMOYLTRANSFERASE, MITOCHONDRIAL"/>
    <property type="match status" value="1"/>
</dbReference>
<dbReference type="Pfam" id="PF00814">
    <property type="entry name" value="TsaD"/>
    <property type="match status" value="1"/>
</dbReference>
<dbReference type="PRINTS" id="PR00789">
    <property type="entry name" value="OSIALOPTASE"/>
</dbReference>
<dbReference type="SUPFAM" id="SSF53067">
    <property type="entry name" value="Actin-like ATPase domain"/>
    <property type="match status" value="1"/>
</dbReference>
<dbReference type="PROSITE" id="PS01016">
    <property type="entry name" value="GLYCOPROTEASE"/>
    <property type="match status" value="1"/>
</dbReference>